<sequence length="104" mass="11134">MGIDPNYRTNRQVVGEHSGHKVYGPVEPPKVLGIHGTIVGVDFDLCIADGSCINACPVNVFQWYDTPGHPASEKKADPVNEQACIFCMACVNVCPVAAIDVKPP</sequence>
<protein>
    <recommendedName>
        <fullName>Zinc-containing ferredoxin-1</fullName>
    </recommendedName>
</protein>
<proteinExistence type="evidence at protein level"/>
<gene>
    <name type="primary">zfx1</name>
    <name type="synonym">zfx</name>
    <name type="ordered locus">STK_01630</name>
</gene>
<accession>P55907</accession>
<accession>O32423</accession>
<organism>
    <name type="scientific">Sulfurisphaera tokodaii (strain DSM 16993 / JCM 10545 / NBRC 100140 / 7)</name>
    <name type="common">Sulfolobus tokodaii</name>
    <dbReference type="NCBI Taxonomy" id="273063"/>
    <lineage>
        <taxon>Archaea</taxon>
        <taxon>Thermoproteota</taxon>
        <taxon>Thermoprotei</taxon>
        <taxon>Sulfolobales</taxon>
        <taxon>Sulfolobaceae</taxon>
        <taxon>Sulfurisphaera</taxon>
    </lineage>
</organism>
<dbReference type="EMBL" id="D78179">
    <property type="protein sequence ID" value="BAA22587.1"/>
    <property type="molecule type" value="Genomic_DNA"/>
</dbReference>
<dbReference type="EMBL" id="BA000023">
    <property type="protein sequence ID" value="BAB65120.1"/>
    <property type="molecule type" value="Genomic_DNA"/>
</dbReference>
<dbReference type="PIR" id="JC4907">
    <property type="entry name" value="JC4907"/>
</dbReference>
<dbReference type="RefSeq" id="WP_010978102.1">
    <property type="nucleotide sequence ID" value="NC_003106.2"/>
</dbReference>
<dbReference type="PDB" id="1XER">
    <property type="method" value="X-ray"/>
    <property type="resolution" value="2.00 A"/>
    <property type="chains" value="A=2-104"/>
</dbReference>
<dbReference type="PDBsum" id="1XER"/>
<dbReference type="SMR" id="P55907"/>
<dbReference type="STRING" id="273063.STK_01630"/>
<dbReference type="iPTMnet" id="P55907"/>
<dbReference type="GeneID" id="92354065"/>
<dbReference type="KEGG" id="sto:STK_01630"/>
<dbReference type="PATRIC" id="fig|273063.9.peg.200"/>
<dbReference type="eggNOG" id="arCOG04548">
    <property type="taxonomic scope" value="Archaea"/>
</dbReference>
<dbReference type="OrthoDB" id="23833at2157"/>
<dbReference type="EvolutionaryTrace" id="P55907"/>
<dbReference type="Proteomes" id="UP000001015">
    <property type="component" value="Chromosome"/>
</dbReference>
<dbReference type="GO" id="GO:0051538">
    <property type="term" value="F:3 iron, 4 sulfur cluster binding"/>
    <property type="evidence" value="ECO:0007669"/>
    <property type="project" value="UniProtKB-KW"/>
</dbReference>
<dbReference type="GO" id="GO:0051539">
    <property type="term" value="F:4 iron, 4 sulfur cluster binding"/>
    <property type="evidence" value="ECO:0007669"/>
    <property type="project" value="UniProtKB-KW"/>
</dbReference>
<dbReference type="GO" id="GO:0009055">
    <property type="term" value="F:electron transfer activity"/>
    <property type="evidence" value="ECO:0007669"/>
    <property type="project" value="InterPro"/>
</dbReference>
<dbReference type="GO" id="GO:0016491">
    <property type="term" value="F:oxidoreductase activity"/>
    <property type="evidence" value="ECO:0007669"/>
    <property type="project" value="UniProtKB-ARBA"/>
</dbReference>
<dbReference type="GO" id="GO:0008270">
    <property type="term" value="F:zinc ion binding"/>
    <property type="evidence" value="ECO:0007669"/>
    <property type="project" value="InterPro"/>
</dbReference>
<dbReference type="Gene3D" id="3.30.70.20">
    <property type="match status" value="1"/>
</dbReference>
<dbReference type="InterPro" id="IPR017896">
    <property type="entry name" value="4Fe4S_Fe-S-bd"/>
</dbReference>
<dbReference type="InterPro" id="IPR017900">
    <property type="entry name" value="4Fe4S_Fe_S_CS"/>
</dbReference>
<dbReference type="InterPro" id="IPR009157">
    <property type="entry name" value="Fd_Zn-bd"/>
</dbReference>
<dbReference type="InterPro" id="IPR050572">
    <property type="entry name" value="Fe-S_Ferredoxin"/>
</dbReference>
<dbReference type="PANTHER" id="PTHR43687">
    <property type="entry name" value="ADENYLYLSULFATE REDUCTASE, BETA SUBUNIT"/>
    <property type="match status" value="1"/>
</dbReference>
<dbReference type="PANTHER" id="PTHR43687:SF6">
    <property type="entry name" value="L-ASPARTATE SEMIALDEHYDE SULFURTRANSFERASE IRON-SULFUR SUBUNIT"/>
    <property type="match status" value="1"/>
</dbReference>
<dbReference type="Pfam" id="PF13237">
    <property type="entry name" value="Fer4_10"/>
    <property type="match status" value="1"/>
</dbReference>
<dbReference type="PIRSF" id="PIRSF000068">
    <property type="entry name" value="Zn_Fdx_Sulfol"/>
    <property type="match status" value="1"/>
</dbReference>
<dbReference type="SUPFAM" id="SSF54862">
    <property type="entry name" value="4Fe-4S ferredoxins"/>
    <property type="match status" value="1"/>
</dbReference>
<dbReference type="PROSITE" id="PS00198">
    <property type="entry name" value="4FE4S_FER_1"/>
    <property type="match status" value="1"/>
</dbReference>
<dbReference type="PROSITE" id="PS51379">
    <property type="entry name" value="4FE4S_FER_2"/>
    <property type="match status" value="2"/>
</dbReference>
<keyword id="KW-0002">3D-structure</keyword>
<keyword id="KW-0003">3Fe-4S</keyword>
<keyword id="KW-0004">4Fe-4S</keyword>
<keyword id="KW-0903">Direct protein sequencing</keyword>
<keyword id="KW-0249">Electron transport</keyword>
<keyword id="KW-0408">Iron</keyword>
<keyword id="KW-0411">Iron-sulfur</keyword>
<keyword id="KW-0479">Metal-binding</keyword>
<keyword id="KW-0488">Methylation</keyword>
<keyword id="KW-1185">Reference proteome</keyword>
<keyword id="KW-0677">Repeat</keyword>
<keyword id="KW-0813">Transport</keyword>
<keyword id="KW-0862">Zinc</keyword>
<name>FER1_SULTO</name>
<feature type="initiator methionine" description="Removed" evidence="2">
    <location>
        <position position="1"/>
    </location>
</feature>
<feature type="chain" id="PRO_0000159180" description="Zinc-containing ferredoxin-1">
    <location>
        <begin position="2"/>
        <end position="104"/>
    </location>
</feature>
<feature type="domain" description="4Fe-4S ferredoxin-type 1" evidence="1">
    <location>
        <begin position="38"/>
        <end position="66"/>
    </location>
</feature>
<feature type="domain" description="4Fe-4S ferredoxin-type 2" evidence="1">
    <location>
        <begin position="75"/>
        <end position="104"/>
    </location>
</feature>
<feature type="region of interest" description="N-terminal extension">
    <location>
        <begin position="2"/>
        <end position="37"/>
    </location>
</feature>
<feature type="binding site">
    <location>
        <position position="17"/>
    </location>
    <ligand>
        <name>Zn(2+)</name>
        <dbReference type="ChEBI" id="CHEBI:29105"/>
    </ligand>
</feature>
<feature type="binding site">
    <location>
        <position position="20"/>
    </location>
    <ligand>
        <name>Zn(2+)</name>
        <dbReference type="ChEBI" id="CHEBI:29105"/>
    </ligand>
</feature>
<feature type="binding site">
    <location>
        <position position="35"/>
    </location>
    <ligand>
        <name>Zn(2+)</name>
        <dbReference type="ChEBI" id="CHEBI:29105"/>
    </ligand>
</feature>
<feature type="binding site">
    <location>
        <position position="46"/>
    </location>
    <ligand>
        <name>[3Fe-4S] cluster</name>
        <dbReference type="ChEBI" id="CHEBI:21137"/>
    </ligand>
</feature>
<feature type="binding site">
    <location>
        <position position="52"/>
    </location>
    <ligand>
        <name>[3Fe-4S] cluster</name>
        <dbReference type="ChEBI" id="CHEBI:21137"/>
    </ligand>
</feature>
<feature type="binding site">
    <location>
        <position position="56"/>
    </location>
    <ligand>
        <name>[4Fe-4S] cluster</name>
        <dbReference type="ChEBI" id="CHEBI:49883"/>
    </ligand>
</feature>
<feature type="binding site">
    <location>
        <position position="77"/>
    </location>
    <ligand>
        <name>Zn(2+)</name>
        <dbReference type="ChEBI" id="CHEBI:29105"/>
    </ligand>
</feature>
<feature type="binding site">
    <location>
        <position position="84"/>
    </location>
    <ligand>
        <name>[4Fe-4S] cluster</name>
        <dbReference type="ChEBI" id="CHEBI:49883"/>
    </ligand>
</feature>
<feature type="binding site">
    <location>
        <position position="87"/>
    </location>
    <ligand>
        <name>[4Fe-4S] cluster</name>
        <dbReference type="ChEBI" id="CHEBI:49883"/>
    </ligand>
</feature>
<feature type="binding site">
    <location>
        <position position="90"/>
    </location>
    <ligand>
        <name>[4Fe-4S] cluster</name>
        <dbReference type="ChEBI" id="CHEBI:49883"/>
    </ligand>
</feature>
<feature type="binding site">
    <location>
        <position position="94"/>
    </location>
    <ligand>
        <name>[3Fe-4S] cluster</name>
        <dbReference type="ChEBI" id="CHEBI:21137"/>
    </ligand>
</feature>
<feature type="modified residue" description="N6-methyllysine" evidence="3">
    <location>
        <position position="30"/>
    </location>
</feature>
<feature type="sequence conflict" description="In Ref. 3; AA sequence." evidence="4" ref="3">
    <original>V</original>
    <variation>L</variation>
    <location>
        <position position="26"/>
    </location>
</feature>
<feature type="sequence conflict" description="In Ref. 1; BAA22587." evidence="4" ref="1">
    <original>N</original>
    <variation>T</variation>
    <location>
        <position position="54"/>
    </location>
</feature>
<feature type="helix" evidence="5">
    <location>
        <begin position="7"/>
        <end position="10"/>
    </location>
</feature>
<feature type="strand" evidence="5">
    <location>
        <begin position="13"/>
        <end position="17"/>
    </location>
</feature>
<feature type="strand" evidence="5">
    <location>
        <begin position="20"/>
        <end position="24"/>
    </location>
</feature>
<feature type="turn" evidence="5">
    <location>
        <begin position="28"/>
        <end position="30"/>
    </location>
</feature>
<feature type="strand" evidence="5">
    <location>
        <begin position="37"/>
        <end position="42"/>
    </location>
</feature>
<feature type="turn" evidence="5">
    <location>
        <begin position="43"/>
        <end position="45"/>
    </location>
</feature>
<feature type="helix" evidence="5">
    <location>
        <begin position="51"/>
        <end position="55"/>
    </location>
</feature>
<feature type="strand" evidence="5">
    <location>
        <begin position="62"/>
        <end position="65"/>
    </location>
</feature>
<feature type="strand" evidence="5">
    <location>
        <begin position="73"/>
        <end position="77"/>
    </location>
</feature>
<feature type="helix" evidence="5">
    <location>
        <begin position="81"/>
        <end position="83"/>
    </location>
</feature>
<feature type="helix" evidence="5">
    <location>
        <begin position="89"/>
        <end position="93"/>
    </location>
</feature>
<feature type="strand" evidence="5">
    <location>
        <begin position="99"/>
        <end position="101"/>
    </location>
</feature>
<evidence type="ECO:0000255" key="1">
    <source>
        <dbReference type="PROSITE-ProRule" id="PRU00711"/>
    </source>
</evidence>
<evidence type="ECO:0000269" key="2">
    <source>
    </source>
</evidence>
<evidence type="ECO:0000303" key="3">
    <source>
    </source>
</evidence>
<evidence type="ECO:0000305" key="4"/>
<evidence type="ECO:0007829" key="5">
    <source>
        <dbReference type="PDB" id="1XER"/>
    </source>
</evidence>
<reference key="1">
    <citation type="journal article" date="1996" name="Biochem. Biophys. Res. Commun.">
        <title>Molecular cloning, sequencing, and heterologous expression of a novel zinc-containing ferredoxin gene from a thermoacidophilic Archaeon Sulfolobus sp. strain 7.</title>
        <authorList>
            <person name="Wakagi T."/>
            <person name="Fujii T."/>
            <person name="Oshima T."/>
        </authorList>
    </citation>
    <scope>NUCLEOTIDE SEQUENCE [GENOMIC DNA]</scope>
    <source>
        <strain>DSM 16993 / JCM 10545 / NBRC 100140 / 7</strain>
    </source>
</reference>
<reference key="2">
    <citation type="journal article" date="2001" name="DNA Res.">
        <title>Complete genome sequence of an aerobic thermoacidophilic Crenarchaeon, Sulfolobus tokodaii strain7.</title>
        <authorList>
            <person name="Kawarabayasi Y."/>
            <person name="Hino Y."/>
            <person name="Horikawa H."/>
            <person name="Jin-no K."/>
            <person name="Takahashi M."/>
            <person name="Sekine M."/>
            <person name="Baba S."/>
            <person name="Ankai A."/>
            <person name="Kosugi H."/>
            <person name="Hosoyama A."/>
            <person name="Fukui S."/>
            <person name="Nagai Y."/>
            <person name="Nishijima K."/>
            <person name="Otsuka R."/>
            <person name="Nakazawa H."/>
            <person name="Takamiya M."/>
            <person name="Kato Y."/>
            <person name="Yoshizawa T."/>
            <person name="Tanaka T."/>
            <person name="Kudoh Y."/>
            <person name="Yamazaki J."/>
            <person name="Kushida N."/>
            <person name="Oguchi A."/>
            <person name="Aoki K."/>
            <person name="Masuda S."/>
            <person name="Yanagii M."/>
            <person name="Nishimura M."/>
            <person name="Yamagishi A."/>
            <person name="Oshima T."/>
            <person name="Kikuchi H."/>
        </authorList>
    </citation>
    <scope>NUCLEOTIDE SEQUENCE [LARGE SCALE GENOMIC DNA]</scope>
    <source>
        <strain>DSM 16993 / JCM 10545 / NBRC 100140 / 7</strain>
    </source>
</reference>
<reference key="3">
    <citation type="journal article" date="1995" name="Biochem. Biophys. Res. Commun.">
        <title>Alternative form of the dicluster ferredoxin from the thermoacidophilic archaeon, Sulfolobus sp. strain 7.</title>
        <authorList>
            <person name="Iwasaki T."/>
            <person name="Fujii T."/>
            <person name="Wakagi T."/>
            <person name="Oshima T."/>
        </authorList>
    </citation>
    <scope>PROTEIN SEQUENCE OF 2-31</scope>
    <scope>METHYLATION AT LYS-30</scope>
    <source>
        <strain>DSM 16993 / JCM 10545 / NBRC 100140 / 7</strain>
    </source>
</reference>
<reference key="4">
    <citation type="journal article" date="1994" name="J. Biol. Chem.">
        <title>Functional and evolutionary implications of a [3Fe-4S] cluster of the dicluster-type ferredoxin from the thermoacidophilic archaeon, Sulfolobus sp. strain 7.</title>
        <authorList>
            <person name="Iwasaki T."/>
            <person name="Wakagi T."/>
            <person name="Isogai Y."/>
            <person name="Tanaka K."/>
            <person name="Iizuka T."/>
            <person name="Oshima T."/>
        </authorList>
    </citation>
    <scope>CHARACTERIZATION</scope>
    <source>
        <strain>DSM 16993 / JCM 10545 / NBRC 100140 / 7</strain>
    </source>
</reference>
<reference key="5">
    <citation type="journal article" date="1997" name="Biochemistry">
        <title>The crystal structure of zinc-containing ferredoxin from the thermoacidophilic archaeon Sulfolobus sp. strain 7.</title>
        <authorList>
            <person name="Fujii T."/>
            <person name="Hata Y."/>
            <person name="Oozeki M."/>
            <person name="Moriyama H."/>
            <person name="Wakagi T."/>
            <person name="Tanaka N."/>
            <person name="Oshima T."/>
        </authorList>
    </citation>
    <scope>X-RAY CRYSTALLOGRAPHY (2.0 ANGSTROMS)</scope>
    <source>
        <strain>DSM 16993 / JCM 10545 / NBRC 100140 / 7</strain>
    </source>
</reference>
<comment type="function">
    <text>Ferredoxins are iron-sulfur proteins that transfer electrons in a wide variety of metabolic reactions.</text>
</comment>
<comment type="cofactor">
    <cofactor>
        <name>[3Fe-4S] cluster</name>
        <dbReference type="ChEBI" id="CHEBI:21137"/>
    </cofactor>
    <text>Binds 1 [3Fe-4S] cluster.</text>
</comment>
<comment type="cofactor">
    <cofactor>
        <name>[4Fe-4S] cluster</name>
        <dbReference type="ChEBI" id="CHEBI:49883"/>
    </cofactor>
    <text>Binds 1 [4Fe-4S] cluster.</text>
</comment>
<comment type="cofactor">
    <cofactor>
        <name>Zn(2+)</name>
        <dbReference type="ChEBI" id="CHEBI:29105"/>
    </cofactor>
    <text>Binds 1 zinc ion.</text>
</comment>
<comment type="biophysicochemical properties">
    <redoxPotential>
        <text>E(0) is -280 mV for the 3Fe-4S and -530 mV for the 4Fe-4S clusters.</text>
    </redoxPotential>
</comment>